<dbReference type="EC" id="5.4.99.12" evidence="1"/>
<dbReference type="EMBL" id="CP001357">
    <property type="protein sequence ID" value="ACN83376.1"/>
    <property type="molecule type" value="Genomic_DNA"/>
</dbReference>
<dbReference type="RefSeq" id="WP_012670425.1">
    <property type="nucleotide sequence ID" value="NC_012225.1"/>
</dbReference>
<dbReference type="SMR" id="C0QZT8"/>
<dbReference type="STRING" id="565034.BHWA1_00885"/>
<dbReference type="GeneID" id="63961995"/>
<dbReference type="KEGG" id="bhy:BHWA1_00885"/>
<dbReference type="eggNOG" id="COG0101">
    <property type="taxonomic scope" value="Bacteria"/>
</dbReference>
<dbReference type="HOGENOM" id="CLU_014673_0_1_12"/>
<dbReference type="Proteomes" id="UP000001803">
    <property type="component" value="Chromosome"/>
</dbReference>
<dbReference type="GO" id="GO:0003723">
    <property type="term" value="F:RNA binding"/>
    <property type="evidence" value="ECO:0007669"/>
    <property type="project" value="InterPro"/>
</dbReference>
<dbReference type="GO" id="GO:0160147">
    <property type="term" value="F:tRNA pseudouridine(38-40) synthase activity"/>
    <property type="evidence" value="ECO:0007669"/>
    <property type="project" value="UniProtKB-EC"/>
</dbReference>
<dbReference type="GO" id="GO:0031119">
    <property type="term" value="P:tRNA pseudouridine synthesis"/>
    <property type="evidence" value="ECO:0007669"/>
    <property type="project" value="UniProtKB-UniRule"/>
</dbReference>
<dbReference type="CDD" id="cd02570">
    <property type="entry name" value="PseudoU_synth_EcTruA"/>
    <property type="match status" value="1"/>
</dbReference>
<dbReference type="FunFam" id="3.30.70.580:FF:000001">
    <property type="entry name" value="tRNA pseudouridine synthase A"/>
    <property type="match status" value="1"/>
</dbReference>
<dbReference type="Gene3D" id="3.30.70.660">
    <property type="entry name" value="Pseudouridine synthase I, catalytic domain, C-terminal subdomain"/>
    <property type="match status" value="1"/>
</dbReference>
<dbReference type="Gene3D" id="3.30.70.580">
    <property type="entry name" value="Pseudouridine synthase I, catalytic domain, N-terminal subdomain"/>
    <property type="match status" value="1"/>
</dbReference>
<dbReference type="HAMAP" id="MF_00171">
    <property type="entry name" value="TruA"/>
    <property type="match status" value="1"/>
</dbReference>
<dbReference type="InterPro" id="IPR020103">
    <property type="entry name" value="PsdUridine_synth_cat_dom_sf"/>
</dbReference>
<dbReference type="InterPro" id="IPR001406">
    <property type="entry name" value="PsdUridine_synth_TruA"/>
</dbReference>
<dbReference type="InterPro" id="IPR020097">
    <property type="entry name" value="PsdUridine_synth_TruA_a/b_dom"/>
</dbReference>
<dbReference type="InterPro" id="IPR020095">
    <property type="entry name" value="PsdUridine_synth_TruA_C"/>
</dbReference>
<dbReference type="InterPro" id="IPR020094">
    <property type="entry name" value="TruA/RsuA/RluB/E/F_N"/>
</dbReference>
<dbReference type="NCBIfam" id="TIGR00071">
    <property type="entry name" value="hisT_truA"/>
    <property type="match status" value="1"/>
</dbReference>
<dbReference type="PANTHER" id="PTHR11142">
    <property type="entry name" value="PSEUDOURIDYLATE SYNTHASE"/>
    <property type="match status" value="1"/>
</dbReference>
<dbReference type="PANTHER" id="PTHR11142:SF0">
    <property type="entry name" value="TRNA PSEUDOURIDINE SYNTHASE-LIKE 1"/>
    <property type="match status" value="1"/>
</dbReference>
<dbReference type="Pfam" id="PF01416">
    <property type="entry name" value="PseudoU_synth_1"/>
    <property type="match status" value="2"/>
</dbReference>
<dbReference type="PIRSF" id="PIRSF001430">
    <property type="entry name" value="tRNA_psdUrid_synth"/>
    <property type="match status" value="1"/>
</dbReference>
<dbReference type="SUPFAM" id="SSF55120">
    <property type="entry name" value="Pseudouridine synthase"/>
    <property type="match status" value="1"/>
</dbReference>
<comment type="function">
    <text evidence="1">Formation of pseudouridine at positions 38, 39 and 40 in the anticodon stem and loop of transfer RNAs.</text>
</comment>
<comment type="catalytic activity">
    <reaction evidence="1">
        <text>uridine(38/39/40) in tRNA = pseudouridine(38/39/40) in tRNA</text>
        <dbReference type="Rhea" id="RHEA:22376"/>
        <dbReference type="Rhea" id="RHEA-COMP:10085"/>
        <dbReference type="Rhea" id="RHEA-COMP:10087"/>
        <dbReference type="ChEBI" id="CHEBI:65314"/>
        <dbReference type="ChEBI" id="CHEBI:65315"/>
        <dbReference type="EC" id="5.4.99.12"/>
    </reaction>
</comment>
<comment type="subunit">
    <text evidence="1">Homodimer.</text>
</comment>
<comment type="similarity">
    <text evidence="1">Belongs to the tRNA pseudouridine synthase TruA family.</text>
</comment>
<accession>C0QZT8</accession>
<feature type="chain" id="PRO_1000194532" description="tRNA pseudouridine synthase A">
    <location>
        <begin position="1"/>
        <end position="249"/>
    </location>
</feature>
<feature type="active site" description="Nucleophile" evidence="1">
    <location>
        <position position="52"/>
    </location>
</feature>
<feature type="binding site" evidence="1">
    <location>
        <position position="111"/>
    </location>
    <ligand>
        <name>substrate</name>
    </ligand>
</feature>
<organism>
    <name type="scientific">Brachyspira hyodysenteriae (strain ATCC 49526 / WA1)</name>
    <dbReference type="NCBI Taxonomy" id="565034"/>
    <lineage>
        <taxon>Bacteria</taxon>
        <taxon>Pseudomonadati</taxon>
        <taxon>Spirochaetota</taxon>
        <taxon>Spirochaetia</taxon>
        <taxon>Brachyspirales</taxon>
        <taxon>Brachyspiraceae</taxon>
        <taxon>Brachyspira</taxon>
    </lineage>
</organism>
<name>TRUA_BRAHW</name>
<proteinExistence type="inferred from homology"/>
<keyword id="KW-0413">Isomerase</keyword>
<keyword id="KW-0819">tRNA processing</keyword>
<reference key="1">
    <citation type="journal article" date="2009" name="PLoS ONE">
        <title>Genome sequence of the pathogenic intestinal spirochete Brachyspira hyodysenteriae reveals adaptations to its lifestyle in the porcine large intestine.</title>
        <authorList>
            <person name="Bellgard M.I."/>
            <person name="Wanchanthuek P."/>
            <person name="La T."/>
            <person name="Ryan K."/>
            <person name="Moolhuijzen P."/>
            <person name="Albertyn Z."/>
            <person name="Shaban B."/>
            <person name="Motro Y."/>
            <person name="Dunn D.S."/>
            <person name="Schibeci D."/>
            <person name="Hunter A."/>
            <person name="Barrero R."/>
            <person name="Phillips N.D."/>
            <person name="Hampson D.J."/>
        </authorList>
    </citation>
    <scope>NUCLEOTIDE SEQUENCE [LARGE SCALE GENOMIC DNA]</scope>
    <source>
        <strain>ATCC 49526 / WA1</strain>
    </source>
</reference>
<evidence type="ECO:0000255" key="1">
    <source>
        <dbReference type="HAMAP-Rule" id="MF_00171"/>
    </source>
</evidence>
<protein>
    <recommendedName>
        <fullName evidence="1">tRNA pseudouridine synthase A</fullName>
        <ecNumber evidence="1">5.4.99.12</ecNumber>
    </recommendedName>
    <alternativeName>
        <fullName evidence="1">tRNA pseudouridine(38-40) synthase</fullName>
    </alternativeName>
    <alternativeName>
        <fullName evidence="1">tRNA pseudouridylate synthase I</fullName>
    </alternativeName>
    <alternativeName>
        <fullName evidence="1">tRNA-uridine isomerase I</fullName>
    </alternativeName>
</protein>
<gene>
    <name evidence="1" type="primary">truA</name>
    <name type="ordered locus">BHWA1_00885</name>
</gene>
<sequence length="249" mass="29103">MNNIKITIQYDGTDFYGWQIQPNLRTVQGEIYKAVQKVYGEKITIYGCGRTDAGVHALGQVANFRVPKMLVPINKVHIALNSYLDRDLRIIKAEEMPDSFNARASATFREYLYIVHNSSTSFPFYERYAWFYRKNVIDEKLINEYARYLIGEHNFTSFCSTEDENDSKFRYLERVKAIRKGDTIYFIIRGNAFLHNMVRIIVGTLVEGQKKKKPINFIEDILKSEDRAKAFVTAPAHGLYFRRAFFKDE</sequence>